<proteinExistence type="evidence at protein level"/>
<reference key="1">
    <citation type="journal article" date="1996" name="Nature">
        <title>A Grb2-associated docking protein in EGF- and insulin-receptor signalling.</title>
        <authorList>
            <person name="Holgado-Madruga M."/>
            <person name="Emlet D.R."/>
            <person name="Moscatello D.K."/>
            <person name="Godwin A.K."/>
            <person name="Wong A.J."/>
        </authorList>
    </citation>
    <scope>NUCLEOTIDE SEQUENCE [MRNA] (ISOFORM 1)</scope>
</reference>
<reference key="2">
    <citation type="submission" date="2005-04" db="EMBL/GenBank/DDBJ databases">
        <authorList>
            <consortium name="NIEHS SNPs program"/>
        </authorList>
    </citation>
    <scope>NUCLEOTIDE SEQUENCE [GENOMIC DNA]</scope>
    <scope>VARIANT LEU-311</scope>
</reference>
<reference key="3">
    <citation type="journal article" date="2004" name="Nat. Genet.">
        <title>Complete sequencing and characterization of 21,243 full-length human cDNAs.</title>
        <authorList>
            <person name="Ota T."/>
            <person name="Suzuki Y."/>
            <person name="Nishikawa T."/>
            <person name="Otsuki T."/>
            <person name="Sugiyama T."/>
            <person name="Irie R."/>
            <person name="Wakamatsu A."/>
            <person name="Hayashi K."/>
            <person name="Sato H."/>
            <person name="Nagai K."/>
            <person name="Kimura K."/>
            <person name="Makita H."/>
            <person name="Sekine M."/>
            <person name="Obayashi M."/>
            <person name="Nishi T."/>
            <person name="Shibahara T."/>
            <person name="Tanaka T."/>
            <person name="Ishii S."/>
            <person name="Yamamoto J."/>
            <person name="Saito K."/>
            <person name="Kawai Y."/>
            <person name="Isono Y."/>
            <person name="Nakamura Y."/>
            <person name="Nagahari K."/>
            <person name="Murakami K."/>
            <person name="Yasuda T."/>
            <person name="Iwayanagi T."/>
            <person name="Wagatsuma M."/>
            <person name="Shiratori A."/>
            <person name="Sudo H."/>
            <person name="Hosoiri T."/>
            <person name="Kaku Y."/>
            <person name="Kodaira H."/>
            <person name="Kondo H."/>
            <person name="Sugawara M."/>
            <person name="Takahashi M."/>
            <person name="Kanda K."/>
            <person name="Yokoi T."/>
            <person name="Furuya T."/>
            <person name="Kikkawa E."/>
            <person name="Omura Y."/>
            <person name="Abe K."/>
            <person name="Kamihara K."/>
            <person name="Katsuta N."/>
            <person name="Sato K."/>
            <person name="Tanikawa M."/>
            <person name="Yamazaki M."/>
            <person name="Ninomiya K."/>
            <person name="Ishibashi T."/>
            <person name="Yamashita H."/>
            <person name="Murakawa K."/>
            <person name="Fujimori K."/>
            <person name="Tanai H."/>
            <person name="Kimata M."/>
            <person name="Watanabe M."/>
            <person name="Hiraoka S."/>
            <person name="Chiba Y."/>
            <person name="Ishida S."/>
            <person name="Ono Y."/>
            <person name="Takiguchi S."/>
            <person name="Watanabe S."/>
            <person name="Yosida M."/>
            <person name="Hotuta T."/>
            <person name="Kusano J."/>
            <person name="Kanehori K."/>
            <person name="Takahashi-Fujii A."/>
            <person name="Hara H."/>
            <person name="Tanase T.-O."/>
            <person name="Nomura Y."/>
            <person name="Togiya S."/>
            <person name="Komai F."/>
            <person name="Hara R."/>
            <person name="Takeuchi K."/>
            <person name="Arita M."/>
            <person name="Imose N."/>
            <person name="Musashino K."/>
            <person name="Yuuki H."/>
            <person name="Oshima A."/>
            <person name="Sasaki N."/>
            <person name="Aotsuka S."/>
            <person name="Yoshikawa Y."/>
            <person name="Matsunawa H."/>
            <person name="Ichihara T."/>
            <person name="Shiohata N."/>
            <person name="Sano S."/>
            <person name="Moriya S."/>
            <person name="Momiyama H."/>
            <person name="Satoh N."/>
            <person name="Takami S."/>
            <person name="Terashima Y."/>
            <person name="Suzuki O."/>
            <person name="Nakagawa S."/>
            <person name="Senoh A."/>
            <person name="Mizoguchi H."/>
            <person name="Goto Y."/>
            <person name="Shimizu F."/>
            <person name="Wakebe H."/>
            <person name="Hishigaki H."/>
            <person name="Watanabe T."/>
            <person name="Sugiyama A."/>
            <person name="Takemoto M."/>
            <person name="Kawakami B."/>
            <person name="Yamazaki M."/>
            <person name="Watanabe K."/>
            <person name="Kumagai A."/>
            <person name="Itakura S."/>
            <person name="Fukuzumi Y."/>
            <person name="Fujimori Y."/>
            <person name="Komiyama M."/>
            <person name="Tashiro H."/>
            <person name="Tanigami A."/>
            <person name="Fujiwara T."/>
            <person name="Ono T."/>
            <person name="Yamada K."/>
            <person name="Fujii Y."/>
            <person name="Ozaki K."/>
            <person name="Hirao M."/>
            <person name="Ohmori Y."/>
            <person name="Kawabata A."/>
            <person name="Hikiji T."/>
            <person name="Kobatake N."/>
            <person name="Inagaki H."/>
            <person name="Ikema Y."/>
            <person name="Okamoto S."/>
            <person name="Okitani R."/>
            <person name="Kawakami T."/>
            <person name="Noguchi S."/>
            <person name="Itoh T."/>
            <person name="Shigeta K."/>
            <person name="Senba T."/>
            <person name="Matsumura K."/>
            <person name="Nakajima Y."/>
            <person name="Mizuno T."/>
            <person name="Morinaga M."/>
            <person name="Sasaki M."/>
            <person name="Togashi T."/>
            <person name="Oyama M."/>
            <person name="Hata H."/>
            <person name="Watanabe M."/>
            <person name="Komatsu T."/>
            <person name="Mizushima-Sugano J."/>
            <person name="Satoh T."/>
            <person name="Shirai Y."/>
            <person name="Takahashi Y."/>
            <person name="Nakagawa K."/>
            <person name="Okumura K."/>
            <person name="Nagase T."/>
            <person name="Nomura N."/>
            <person name="Kikuchi H."/>
            <person name="Masuho Y."/>
            <person name="Yamashita R."/>
            <person name="Nakai K."/>
            <person name="Yada T."/>
            <person name="Nakamura Y."/>
            <person name="Ohara O."/>
            <person name="Isogai T."/>
            <person name="Sugano S."/>
        </authorList>
    </citation>
    <scope>NUCLEOTIDE SEQUENCE [LARGE SCALE MRNA] (ISOFORM 1)</scope>
    <source>
        <tissue>Brain</tissue>
    </source>
</reference>
<reference key="4">
    <citation type="journal article" date="2005" name="Nature">
        <title>Generation and annotation of the DNA sequences of human chromosomes 2 and 4.</title>
        <authorList>
            <person name="Hillier L.W."/>
            <person name="Graves T.A."/>
            <person name="Fulton R.S."/>
            <person name="Fulton L.A."/>
            <person name="Pepin K.H."/>
            <person name="Minx P."/>
            <person name="Wagner-McPherson C."/>
            <person name="Layman D."/>
            <person name="Wylie K."/>
            <person name="Sekhon M."/>
            <person name="Becker M.C."/>
            <person name="Fewell G.A."/>
            <person name="Delehaunty K.D."/>
            <person name="Miner T.L."/>
            <person name="Nash W.E."/>
            <person name="Kremitzki C."/>
            <person name="Oddy L."/>
            <person name="Du H."/>
            <person name="Sun H."/>
            <person name="Bradshaw-Cordum H."/>
            <person name="Ali J."/>
            <person name="Carter J."/>
            <person name="Cordes M."/>
            <person name="Harris A."/>
            <person name="Isak A."/>
            <person name="van Brunt A."/>
            <person name="Nguyen C."/>
            <person name="Du F."/>
            <person name="Courtney L."/>
            <person name="Kalicki J."/>
            <person name="Ozersky P."/>
            <person name="Abbott S."/>
            <person name="Armstrong J."/>
            <person name="Belter E.A."/>
            <person name="Caruso L."/>
            <person name="Cedroni M."/>
            <person name="Cotton M."/>
            <person name="Davidson T."/>
            <person name="Desai A."/>
            <person name="Elliott G."/>
            <person name="Erb T."/>
            <person name="Fronick C."/>
            <person name="Gaige T."/>
            <person name="Haakenson W."/>
            <person name="Haglund K."/>
            <person name="Holmes A."/>
            <person name="Harkins R."/>
            <person name="Kim K."/>
            <person name="Kruchowski S.S."/>
            <person name="Strong C.M."/>
            <person name="Grewal N."/>
            <person name="Goyea E."/>
            <person name="Hou S."/>
            <person name="Levy A."/>
            <person name="Martinka S."/>
            <person name="Mead K."/>
            <person name="McLellan M.D."/>
            <person name="Meyer R."/>
            <person name="Randall-Maher J."/>
            <person name="Tomlinson C."/>
            <person name="Dauphin-Kohlberg S."/>
            <person name="Kozlowicz-Reilly A."/>
            <person name="Shah N."/>
            <person name="Swearengen-Shahid S."/>
            <person name="Snider J."/>
            <person name="Strong J.T."/>
            <person name="Thompson J."/>
            <person name="Yoakum M."/>
            <person name="Leonard S."/>
            <person name="Pearman C."/>
            <person name="Trani L."/>
            <person name="Radionenko M."/>
            <person name="Waligorski J.E."/>
            <person name="Wang C."/>
            <person name="Rock S.M."/>
            <person name="Tin-Wollam A.-M."/>
            <person name="Maupin R."/>
            <person name="Latreille P."/>
            <person name="Wendl M.C."/>
            <person name="Yang S.-P."/>
            <person name="Pohl C."/>
            <person name="Wallis J.W."/>
            <person name="Spieth J."/>
            <person name="Bieri T.A."/>
            <person name="Berkowicz N."/>
            <person name="Nelson J.O."/>
            <person name="Osborne J."/>
            <person name="Ding L."/>
            <person name="Meyer R."/>
            <person name="Sabo A."/>
            <person name="Shotland Y."/>
            <person name="Sinha P."/>
            <person name="Wohldmann P.E."/>
            <person name="Cook L.L."/>
            <person name="Hickenbotham M.T."/>
            <person name="Eldred J."/>
            <person name="Williams D."/>
            <person name="Jones T.A."/>
            <person name="She X."/>
            <person name="Ciccarelli F.D."/>
            <person name="Izaurralde E."/>
            <person name="Taylor J."/>
            <person name="Schmutz J."/>
            <person name="Myers R.M."/>
            <person name="Cox D.R."/>
            <person name="Huang X."/>
            <person name="McPherson J.D."/>
            <person name="Mardis E.R."/>
            <person name="Clifton S.W."/>
            <person name="Warren W.C."/>
            <person name="Chinwalla A.T."/>
            <person name="Eddy S.R."/>
            <person name="Marra M.A."/>
            <person name="Ovcharenko I."/>
            <person name="Furey T.S."/>
            <person name="Miller W."/>
            <person name="Eichler E.E."/>
            <person name="Bork P."/>
            <person name="Suyama M."/>
            <person name="Torrents D."/>
            <person name="Waterston R.H."/>
            <person name="Wilson R.K."/>
        </authorList>
    </citation>
    <scope>NUCLEOTIDE SEQUENCE [LARGE SCALE GENOMIC DNA]</scope>
</reference>
<reference key="5">
    <citation type="submission" date="2005-09" db="EMBL/GenBank/DDBJ databases">
        <authorList>
            <person name="Mural R.J."/>
            <person name="Istrail S."/>
            <person name="Sutton G.G."/>
            <person name="Florea L."/>
            <person name="Halpern A.L."/>
            <person name="Mobarry C.M."/>
            <person name="Lippert R."/>
            <person name="Walenz B."/>
            <person name="Shatkay H."/>
            <person name="Dew I."/>
            <person name="Miller J.R."/>
            <person name="Flanigan M.J."/>
            <person name="Edwards N.J."/>
            <person name="Bolanos R."/>
            <person name="Fasulo D."/>
            <person name="Halldorsson B.V."/>
            <person name="Hannenhalli S."/>
            <person name="Turner R."/>
            <person name="Yooseph S."/>
            <person name="Lu F."/>
            <person name="Nusskern D.R."/>
            <person name="Shue B.C."/>
            <person name="Zheng X.H."/>
            <person name="Zhong F."/>
            <person name="Delcher A.L."/>
            <person name="Huson D.H."/>
            <person name="Kravitz S.A."/>
            <person name="Mouchard L."/>
            <person name="Reinert K."/>
            <person name="Remington K.A."/>
            <person name="Clark A.G."/>
            <person name="Waterman M.S."/>
            <person name="Eichler E.E."/>
            <person name="Adams M.D."/>
            <person name="Hunkapiller M.W."/>
            <person name="Myers E.W."/>
            <person name="Venter J.C."/>
        </authorList>
    </citation>
    <scope>NUCLEOTIDE SEQUENCE [LARGE SCALE GENOMIC DNA]</scope>
</reference>
<reference key="6">
    <citation type="journal article" date="2004" name="Genome Res.">
        <title>The status, quality, and expansion of the NIH full-length cDNA project: the Mammalian Gene Collection (MGC).</title>
        <authorList>
            <consortium name="The MGC Project Team"/>
        </authorList>
    </citation>
    <scope>NUCLEOTIDE SEQUENCE [LARGE SCALE MRNA] (ISOFORM 2)</scope>
    <source>
        <tissue>Testis</tissue>
    </source>
</reference>
<reference key="7">
    <citation type="journal article" date="2002" name="J. Exp. Med.">
        <title>Non-T cell activation linker (NTAL): a transmembrane adaptor protein involved in immunoreceptor signaling.</title>
        <authorList>
            <person name="Brdicka T."/>
            <person name="Imrich M."/>
            <person name="Angelisova P."/>
            <person name="Brdickova N."/>
            <person name="Horvath O."/>
            <person name="Spicka J."/>
            <person name="Hilgert I."/>
            <person name="Luskova P."/>
            <person name="Draber P."/>
            <person name="Novak P."/>
            <person name="Engels N."/>
            <person name="Wienands J."/>
            <person name="Simeoni L."/>
            <person name="Oesterreicher J."/>
            <person name="Aguado E."/>
            <person name="Malissen M."/>
            <person name="Schraven B."/>
            <person name="Horejsi V."/>
        </authorList>
    </citation>
    <scope>INTERACTION WITH LAT2</scope>
</reference>
<reference key="8">
    <citation type="journal article" date="2003" name="J. Biol. Chem.">
        <title>Hepatocyte growth factor receptor tyrosine kinase met is a substrate of the receptor protein-tyrosine phosphatase DEP-1.</title>
        <authorList>
            <person name="Palka H.L."/>
            <person name="Park M."/>
            <person name="Tonks N.K."/>
        </authorList>
    </citation>
    <scope>INTERACTION WITH PTPRJ</scope>
</reference>
<reference key="9">
    <citation type="journal article" date="2004" name="J. Biol. Chem.">
        <title>Critical role for hematopoietic cell kinase (Hck)-mediated phosphorylation of Gab1 and Gab2 docking proteins in interleukin 6-induced proliferation and survival of multiple myeloma cells.</title>
        <authorList>
            <person name="Podar K."/>
            <person name="Mostoslavsky G."/>
            <person name="Sattler M."/>
            <person name="Tai Y.T."/>
            <person name="Hayashi T."/>
            <person name="Catley L.P."/>
            <person name="Hideshima T."/>
            <person name="Mulligan R.C."/>
            <person name="Chauhan D."/>
            <person name="Anderson K.C."/>
        </authorList>
    </citation>
    <scope>PHOSPHORYLATION BY HCK</scope>
    <scope>INTERACTION WITH HCK; CRKL PTPN11 AND GRB2</scope>
</reference>
<reference key="10">
    <citation type="journal article" date="2005" name="Cytokine Growth Factor Rev.">
        <title>Cellular signaling by fibroblast growth factor receptors.</title>
        <authorList>
            <person name="Eswarakumar V.P."/>
            <person name="Lax I."/>
            <person name="Schlessinger J."/>
        </authorList>
    </citation>
    <scope>REVIEW ON ROLE IN FGFR1 SIGNALING; SUBUNIT; PHOSPHORYLATION</scope>
</reference>
<reference key="11">
    <citation type="journal article" date="2008" name="Proc. Natl. Acad. Sci. U.S.A.">
        <title>A quantitative atlas of mitotic phosphorylation.</title>
        <authorList>
            <person name="Dephoure N."/>
            <person name="Zhou C."/>
            <person name="Villen J."/>
            <person name="Beausoleil S.A."/>
            <person name="Bakalarski C.E."/>
            <person name="Elledge S.J."/>
            <person name="Gygi S.P."/>
        </authorList>
    </citation>
    <scope>PHOSPHORYLATION [LARGE SCALE ANALYSIS] AT TYR-659</scope>
    <scope>PHOSPHORYLATION [LARGE SCALE ANALYSIS] AT SER-547 (ISOFORM 2)</scope>
    <scope>IDENTIFICATION BY MASS SPECTROMETRY [LARGE SCALE ANALYSIS]</scope>
    <source>
        <tissue>Cervix carcinoma</tissue>
    </source>
</reference>
<reference key="12">
    <citation type="journal article" date="2010" name="Sci. Signal.">
        <title>Quantitative phosphoproteomics reveals widespread full phosphorylation site occupancy during mitosis.</title>
        <authorList>
            <person name="Olsen J.V."/>
            <person name="Vermeulen M."/>
            <person name="Santamaria A."/>
            <person name="Kumar C."/>
            <person name="Miller M.L."/>
            <person name="Jensen L.J."/>
            <person name="Gnad F."/>
            <person name="Cox J."/>
            <person name="Jensen T.S."/>
            <person name="Nigg E.A."/>
            <person name="Brunak S."/>
            <person name="Mann M."/>
        </authorList>
    </citation>
    <scope>PHOSPHORYLATION [LARGE SCALE ANALYSIS] AT TYR-627</scope>
    <scope>IDENTIFICATION BY MASS SPECTROMETRY [LARGE SCALE ANALYSIS]</scope>
    <source>
        <tissue>Cervix carcinoma</tissue>
    </source>
</reference>
<reference key="13">
    <citation type="journal article" date="2012" name="Mol. Cell. Proteomics">
        <title>Comparative large-scale characterisation of plant vs. mammal proteins reveals similar and idiosyncratic N-alpha acetylation features.</title>
        <authorList>
            <person name="Bienvenut W.V."/>
            <person name="Sumpton D."/>
            <person name="Martinez A."/>
            <person name="Lilla S."/>
            <person name="Espagne C."/>
            <person name="Meinnel T."/>
            <person name="Giglione C."/>
        </authorList>
    </citation>
    <scope>ACETYLATION [LARGE SCALE ANALYSIS] AT SER-2</scope>
    <scope>CLEAVAGE OF INITIATOR METHIONINE [LARGE SCALE ANALYSIS]</scope>
    <scope>IDENTIFICATION BY MASS SPECTROMETRY [LARGE SCALE ANALYSIS]</scope>
</reference>
<reference key="14">
    <citation type="journal article" date="2013" name="J. Proteome Res.">
        <title>Toward a comprehensive characterization of a human cancer cell phosphoproteome.</title>
        <authorList>
            <person name="Zhou H."/>
            <person name="Di Palma S."/>
            <person name="Preisinger C."/>
            <person name="Peng M."/>
            <person name="Polat A.N."/>
            <person name="Heck A.J."/>
            <person name="Mohammed S."/>
        </authorList>
    </citation>
    <scope>PHOSPHORYLATION [LARGE SCALE ANALYSIS] AT SER-251; SER-253; SER-266; SER-304; THR-387; SER-402; THR-638; SER-651; TYR-659 AND SER-683</scope>
    <scope>IDENTIFICATION BY MASS SPECTROMETRY [LARGE SCALE ANALYSIS]</scope>
    <source>
        <tissue>Cervix carcinoma</tissue>
        <tissue>Erythroleukemia</tissue>
    </source>
</reference>
<reference key="15">
    <citation type="journal article" date="2006" name="Science">
        <title>The consensus coding sequences of human breast and colorectal cancers.</title>
        <authorList>
            <person name="Sjoeblom T."/>
            <person name="Jones S."/>
            <person name="Wood L.D."/>
            <person name="Parsons D.W."/>
            <person name="Lin J."/>
            <person name="Barber T.D."/>
            <person name="Mandelker D."/>
            <person name="Leary R.J."/>
            <person name="Ptak J."/>
            <person name="Silliman N."/>
            <person name="Szabo S."/>
            <person name="Buckhaults P."/>
            <person name="Farrell C."/>
            <person name="Meeh P."/>
            <person name="Markowitz S.D."/>
            <person name="Willis J."/>
            <person name="Dawson D."/>
            <person name="Willson J.K.V."/>
            <person name="Gazdar A.F."/>
            <person name="Hartigan J."/>
            <person name="Wu L."/>
            <person name="Liu C."/>
            <person name="Parmigiani G."/>
            <person name="Park B.H."/>
            <person name="Bachman K.E."/>
            <person name="Papadopoulos N."/>
            <person name="Vogelstein B."/>
            <person name="Kinzler K.W."/>
            <person name="Velculescu V.E."/>
        </authorList>
    </citation>
    <scope>VARIANTS [LARGE SCALE ANALYSIS] CYS-83 AND ASN-387</scope>
</reference>
<reference key="16">
    <citation type="journal article" date="2018" name="J. Clin. Invest.">
        <title>Modifier variant of METTL13 suppresses human GAB1-associated profound deafness.</title>
        <authorList>
            <person name="Yousaf R."/>
            <person name="Ahmed Z.M."/>
            <person name="Giese A.P."/>
            <person name="Morell R.J."/>
            <person name="Lagziel A."/>
            <person name="Dabdoub A."/>
            <person name="Wilcox E.R."/>
            <person name="Riazuddin S."/>
            <person name="Friedman T.B."/>
            <person name="Riazuddin S."/>
        </authorList>
    </citation>
    <scope>FUNCTION</scope>
    <scope>INTERACTION WITH METTL13 AND SPRY2</scope>
    <scope>INVOLVEMENT IN DFNB26</scope>
    <scope>VARIANT DFNB26 GLU-116</scope>
    <scope>CHARACTERIZATION OF VARIANT DFNB26 GLU-116</scope>
</reference>
<gene>
    <name type="primary">GAB1</name>
</gene>
<dbReference type="EMBL" id="U43885">
    <property type="protein sequence ID" value="AAC50380.1"/>
    <property type="molecule type" value="mRNA"/>
</dbReference>
<dbReference type="EMBL" id="DQ021880">
    <property type="protein sequence ID" value="AAY26398.1"/>
    <property type="molecule type" value="Genomic_DNA"/>
</dbReference>
<dbReference type="EMBL" id="AK289767">
    <property type="protein sequence ID" value="BAF82456.1"/>
    <property type="molecule type" value="mRNA"/>
</dbReference>
<dbReference type="EMBL" id="AC097658">
    <property type="status" value="NOT_ANNOTATED_CDS"/>
    <property type="molecule type" value="Genomic_DNA"/>
</dbReference>
<dbReference type="EMBL" id="AC104685">
    <property type="protein sequence ID" value="AAY40964.1"/>
    <property type="molecule type" value="Genomic_DNA"/>
</dbReference>
<dbReference type="EMBL" id="CH471056">
    <property type="protein sequence ID" value="EAX05072.1"/>
    <property type="molecule type" value="Genomic_DNA"/>
</dbReference>
<dbReference type="EMBL" id="BC064848">
    <property type="protein sequence ID" value="AAH64848.1"/>
    <property type="molecule type" value="mRNA"/>
</dbReference>
<dbReference type="CCDS" id="CCDS3759.1">
    <molecule id="Q13480-1"/>
</dbReference>
<dbReference type="CCDS" id="CCDS3760.1">
    <molecule id="Q13480-2"/>
</dbReference>
<dbReference type="PIR" id="S68442">
    <property type="entry name" value="S68442"/>
</dbReference>
<dbReference type="RefSeq" id="NP_002030.2">
    <molecule id="Q13480-1"/>
    <property type="nucleotide sequence ID" value="NM_002039.3"/>
</dbReference>
<dbReference type="RefSeq" id="NP_997006.1">
    <molecule id="Q13480-2"/>
    <property type="nucleotide sequence ID" value="NM_207123.3"/>
</dbReference>
<dbReference type="PDB" id="4QSY">
    <property type="method" value="X-ray"/>
    <property type="resolution" value="2.10 A"/>
    <property type="chains" value="B=621-633"/>
</dbReference>
<dbReference type="PDBsum" id="4QSY"/>
<dbReference type="SMR" id="Q13480"/>
<dbReference type="BioGRID" id="108824">
    <property type="interactions" value="165"/>
</dbReference>
<dbReference type="CORUM" id="Q13480"/>
<dbReference type="ELM" id="Q13480"/>
<dbReference type="FunCoup" id="Q13480">
    <property type="interactions" value="1946"/>
</dbReference>
<dbReference type="IntAct" id="Q13480">
    <property type="interactions" value="145"/>
</dbReference>
<dbReference type="MINT" id="Q13480"/>
<dbReference type="STRING" id="9606.ENSP00000262995"/>
<dbReference type="ChEMBL" id="CHEMBL4523286"/>
<dbReference type="MoonDB" id="Q13480">
    <property type="type" value="Predicted"/>
</dbReference>
<dbReference type="GlyCosmos" id="Q13480">
    <property type="glycosylation" value="2 sites, 1 glycan"/>
</dbReference>
<dbReference type="GlyGen" id="Q13480">
    <property type="glycosylation" value="3 sites, 1 O-linked glycan (2 sites)"/>
</dbReference>
<dbReference type="iPTMnet" id="Q13480"/>
<dbReference type="PhosphoSitePlus" id="Q13480"/>
<dbReference type="BioMuta" id="GAB1"/>
<dbReference type="DMDM" id="90180201"/>
<dbReference type="CPTAC" id="CPTAC-1557"/>
<dbReference type="jPOST" id="Q13480"/>
<dbReference type="MassIVE" id="Q13480"/>
<dbReference type="PaxDb" id="9606-ENSP00000262995"/>
<dbReference type="PeptideAtlas" id="Q13480"/>
<dbReference type="ProteomicsDB" id="59477">
    <molecule id="Q13480-1"/>
</dbReference>
<dbReference type="ProteomicsDB" id="59478">
    <molecule id="Q13480-2"/>
</dbReference>
<dbReference type="Pumba" id="Q13480"/>
<dbReference type="Antibodypedia" id="3614">
    <property type="antibodies" value="369 antibodies from 42 providers"/>
</dbReference>
<dbReference type="DNASU" id="2549"/>
<dbReference type="Ensembl" id="ENST00000262994.9">
    <molecule id="Q13480-1"/>
    <property type="protein sequence ID" value="ENSP00000262994.4"/>
    <property type="gene ID" value="ENSG00000109458.10"/>
</dbReference>
<dbReference type="Ensembl" id="ENST00000262995.9">
    <molecule id="Q13480-2"/>
    <property type="protein sequence ID" value="ENSP00000262995.4"/>
    <property type="gene ID" value="ENSG00000109458.10"/>
</dbReference>
<dbReference type="GeneID" id="2549"/>
<dbReference type="KEGG" id="hsa:2549"/>
<dbReference type="MANE-Select" id="ENST00000262994.9">
    <property type="protein sequence ID" value="ENSP00000262994.4"/>
    <property type="RefSeq nucleotide sequence ID" value="NM_002039.4"/>
    <property type="RefSeq protein sequence ID" value="NP_002030.2"/>
</dbReference>
<dbReference type="UCSC" id="uc003ijd.4">
    <molecule id="Q13480-1"/>
    <property type="organism name" value="human"/>
</dbReference>
<dbReference type="AGR" id="HGNC:4066"/>
<dbReference type="CTD" id="2549"/>
<dbReference type="DisGeNET" id="2549"/>
<dbReference type="GeneCards" id="GAB1"/>
<dbReference type="HGNC" id="HGNC:4066">
    <property type="gene designation" value="GAB1"/>
</dbReference>
<dbReference type="HPA" id="ENSG00000109458">
    <property type="expression patterns" value="Low tissue specificity"/>
</dbReference>
<dbReference type="MalaCards" id="GAB1"/>
<dbReference type="MIM" id="604439">
    <property type="type" value="gene"/>
</dbReference>
<dbReference type="MIM" id="605428">
    <property type="type" value="phenotype"/>
</dbReference>
<dbReference type="neXtProt" id="NX_Q13480"/>
<dbReference type="OpenTargets" id="ENSG00000109458"/>
<dbReference type="PharmGKB" id="PA28477"/>
<dbReference type="VEuPathDB" id="HostDB:ENSG00000109458"/>
<dbReference type="eggNOG" id="KOG3751">
    <property type="taxonomic scope" value="Eukaryota"/>
</dbReference>
<dbReference type="GeneTree" id="ENSGT00940000156801"/>
<dbReference type="HOGENOM" id="CLU_028652_0_0_1"/>
<dbReference type="InParanoid" id="Q13480"/>
<dbReference type="OMA" id="SHKDGEP"/>
<dbReference type="OrthoDB" id="67516at2759"/>
<dbReference type="PAN-GO" id="Q13480">
    <property type="GO annotations" value="3 GO annotations based on evolutionary models"/>
</dbReference>
<dbReference type="PhylomeDB" id="Q13480"/>
<dbReference type="TreeFam" id="TF329487"/>
<dbReference type="PathwayCommons" id="Q13480"/>
<dbReference type="Reactome" id="R-HSA-109704">
    <property type="pathway name" value="PI3K Cascade"/>
</dbReference>
<dbReference type="Reactome" id="R-HSA-1236382">
    <property type="pathway name" value="Constitutive Signaling by Ligand-Responsive EGFR Cancer Variants"/>
</dbReference>
<dbReference type="Reactome" id="R-HSA-1257604">
    <property type="pathway name" value="PIP3 activates AKT signaling"/>
</dbReference>
<dbReference type="Reactome" id="R-HSA-180292">
    <property type="pathway name" value="GAB1 signalosome"/>
</dbReference>
<dbReference type="Reactome" id="R-HSA-1963642">
    <property type="pathway name" value="PI3K events in ERBB2 signaling"/>
</dbReference>
<dbReference type="Reactome" id="R-HSA-2219530">
    <property type="pathway name" value="Constitutive Signaling by Aberrant PI3K in Cancer"/>
</dbReference>
<dbReference type="Reactome" id="R-HSA-5637810">
    <property type="pathway name" value="Constitutive Signaling by EGFRvIII"/>
</dbReference>
<dbReference type="Reactome" id="R-HSA-5654689">
    <property type="pathway name" value="PI-3K cascade:FGFR1"/>
</dbReference>
<dbReference type="Reactome" id="R-HSA-5654695">
    <property type="pathway name" value="PI-3K cascade:FGFR2"/>
</dbReference>
<dbReference type="Reactome" id="R-HSA-5654710">
    <property type="pathway name" value="PI-3K cascade:FGFR3"/>
</dbReference>
<dbReference type="Reactome" id="R-HSA-5654720">
    <property type="pathway name" value="PI-3K cascade:FGFR4"/>
</dbReference>
<dbReference type="Reactome" id="R-HSA-5655253">
    <property type="pathway name" value="Signaling by FGFR2 in disease"/>
</dbReference>
<dbReference type="Reactome" id="R-HSA-5655291">
    <property type="pathway name" value="Signaling by FGFR4 in disease"/>
</dbReference>
<dbReference type="Reactome" id="R-HSA-5655302">
    <property type="pathway name" value="Signaling by FGFR1 in disease"/>
</dbReference>
<dbReference type="Reactome" id="R-HSA-5655332">
    <property type="pathway name" value="Signaling by FGFR3 in disease"/>
</dbReference>
<dbReference type="Reactome" id="R-HSA-6811558">
    <property type="pathway name" value="PI5P, PP2A and IER3 Regulate PI3K/AKT Signaling"/>
</dbReference>
<dbReference type="Reactome" id="R-HSA-8851907">
    <property type="pathway name" value="MET activates PI3K/AKT signaling"/>
</dbReference>
<dbReference type="Reactome" id="R-HSA-8853659">
    <property type="pathway name" value="RET signaling"/>
</dbReference>
<dbReference type="Reactome" id="R-HSA-8865999">
    <property type="pathway name" value="MET activates PTPN11"/>
</dbReference>
<dbReference type="Reactome" id="R-HSA-8875555">
    <property type="pathway name" value="MET activates RAP1 and RAC1"/>
</dbReference>
<dbReference type="Reactome" id="R-HSA-8875656">
    <property type="pathway name" value="MET receptor recycling"/>
</dbReference>
<dbReference type="Reactome" id="R-HSA-9027276">
    <property type="pathway name" value="Erythropoietin activates Phosphoinositide-3-kinase (PI3K)"/>
</dbReference>
<dbReference type="Reactome" id="R-HSA-9028335">
    <property type="pathway name" value="Activated NTRK2 signals through PI3K"/>
</dbReference>
<dbReference type="Reactome" id="R-HSA-9664565">
    <property type="pathway name" value="Signaling by ERBB2 KD Mutants"/>
</dbReference>
<dbReference type="Reactome" id="R-HSA-9665348">
    <property type="pathway name" value="Signaling by ERBB2 ECD mutants"/>
</dbReference>
<dbReference type="SignaLink" id="Q13480"/>
<dbReference type="SIGNOR" id="Q13480"/>
<dbReference type="BioGRID-ORCS" id="2549">
    <property type="hits" value="59 hits in 1155 CRISPR screens"/>
</dbReference>
<dbReference type="ChiTaRS" id="GAB1">
    <property type="organism name" value="human"/>
</dbReference>
<dbReference type="EvolutionaryTrace" id="Q13480"/>
<dbReference type="GeneWiki" id="GAB1"/>
<dbReference type="GenomeRNAi" id="2549"/>
<dbReference type="Pharos" id="Q13480">
    <property type="development level" value="Tchem"/>
</dbReference>
<dbReference type="PRO" id="PR:Q13480"/>
<dbReference type="Proteomes" id="UP000005640">
    <property type="component" value="Chromosome 4"/>
</dbReference>
<dbReference type="RNAct" id="Q13480">
    <property type="molecule type" value="protein"/>
</dbReference>
<dbReference type="Bgee" id="ENSG00000109458">
    <property type="expression patterns" value="Expressed in secondary oocyte and 191 other cell types or tissues"/>
</dbReference>
<dbReference type="ExpressionAtlas" id="Q13480">
    <property type="expression patterns" value="baseline and differential"/>
</dbReference>
<dbReference type="GO" id="GO:0005911">
    <property type="term" value="C:cell-cell junction"/>
    <property type="evidence" value="ECO:0000315"/>
    <property type="project" value="ARUK-UCL"/>
</dbReference>
<dbReference type="GO" id="GO:0005737">
    <property type="term" value="C:cytoplasm"/>
    <property type="evidence" value="ECO:0000318"/>
    <property type="project" value="GO_Central"/>
</dbReference>
<dbReference type="GO" id="GO:0005829">
    <property type="term" value="C:cytosol"/>
    <property type="evidence" value="ECO:0000304"/>
    <property type="project" value="Reactome"/>
</dbReference>
<dbReference type="GO" id="GO:0035591">
    <property type="term" value="F:signaling adaptor activity"/>
    <property type="evidence" value="ECO:0000318"/>
    <property type="project" value="GO_Central"/>
</dbReference>
<dbReference type="GO" id="GO:0001525">
    <property type="term" value="P:angiogenesis"/>
    <property type="evidence" value="ECO:0000315"/>
    <property type="project" value="BHF-UCL"/>
</dbReference>
<dbReference type="GO" id="GO:0071260">
    <property type="term" value="P:cellular response to mechanical stimulus"/>
    <property type="evidence" value="ECO:0000304"/>
    <property type="project" value="ARUK-UCL"/>
</dbReference>
<dbReference type="GO" id="GO:0035767">
    <property type="term" value="P:endothelial cell chemotaxis"/>
    <property type="evidence" value="ECO:0000315"/>
    <property type="project" value="BHF-UCL"/>
</dbReference>
<dbReference type="GO" id="GO:0007173">
    <property type="term" value="P:epidermal growth factor receptor signaling pathway"/>
    <property type="evidence" value="ECO:0000304"/>
    <property type="project" value="ProtInc"/>
</dbReference>
<dbReference type="GO" id="GO:0008286">
    <property type="term" value="P:insulin receptor signaling pathway"/>
    <property type="evidence" value="ECO:0000304"/>
    <property type="project" value="ProtInc"/>
</dbReference>
<dbReference type="GO" id="GO:0035556">
    <property type="term" value="P:intracellular signal transduction"/>
    <property type="evidence" value="ECO:0000304"/>
    <property type="project" value="ARUK-UCL"/>
</dbReference>
<dbReference type="GO" id="GO:0045766">
    <property type="term" value="P:positive regulation of angiogenesis"/>
    <property type="evidence" value="ECO:0000315"/>
    <property type="project" value="BHF-UCL"/>
</dbReference>
<dbReference type="GO" id="GO:0043536">
    <property type="term" value="P:positive regulation of blood vessel endothelial cell migration"/>
    <property type="evidence" value="ECO:0000250"/>
    <property type="project" value="BHF-UCL"/>
</dbReference>
<dbReference type="GO" id="GO:0051897">
    <property type="term" value="P:positive regulation of phosphatidylinositol 3-kinase/protein kinase B signal transduction"/>
    <property type="evidence" value="ECO:0000304"/>
    <property type="project" value="ARUK-UCL"/>
</dbReference>
<dbReference type="GO" id="GO:0007165">
    <property type="term" value="P:signal transduction"/>
    <property type="evidence" value="ECO:0000318"/>
    <property type="project" value="GO_Central"/>
</dbReference>
<dbReference type="GO" id="GO:0038084">
    <property type="term" value="P:vascular endothelial growth factor signaling pathway"/>
    <property type="evidence" value="ECO:0000315"/>
    <property type="project" value="BHF-UCL"/>
</dbReference>
<dbReference type="GO" id="GO:0042311">
    <property type="term" value="P:vasodilation"/>
    <property type="evidence" value="ECO:0000304"/>
    <property type="project" value="ARUK-UCL"/>
</dbReference>
<dbReference type="CDD" id="cd01266">
    <property type="entry name" value="PH_Gab1_Gab2"/>
    <property type="match status" value="1"/>
</dbReference>
<dbReference type="FunFam" id="2.30.29.30:FF:000166">
    <property type="entry name" value="GRB2-associated-binding protein 1 isoform X1"/>
    <property type="match status" value="1"/>
</dbReference>
<dbReference type="Gene3D" id="2.30.29.30">
    <property type="entry name" value="Pleckstrin-homology domain (PH domain)/Phosphotyrosine-binding domain (PTB)"/>
    <property type="match status" value="1"/>
</dbReference>
<dbReference type="InterPro" id="IPR046355">
    <property type="entry name" value="Gab1-4-like"/>
</dbReference>
<dbReference type="InterPro" id="IPR011993">
    <property type="entry name" value="PH-like_dom_sf"/>
</dbReference>
<dbReference type="InterPro" id="IPR001849">
    <property type="entry name" value="PH_domain"/>
</dbReference>
<dbReference type="PANTHER" id="PTHR45960">
    <property type="entry name" value="GRB2-ASSOCIATED-BINDING PROTEIN"/>
    <property type="match status" value="1"/>
</dbReference>
<dbReference type="PANTHER" id="PTHR45960:SF5">
    <property type="entry name" value="GRB2-ASSOCIATED-BINDING PROTEIN 1"/>
    <property type="match status" value="1"/>
</dbReference>
<dbReference type="Pfam" id="PF00169">
    <property type="entry name" value="PH"/>
    <property type="match status" value="1"/>
</dbReference>
<dbReference type="SMART" id="SM00233">
    <property type="entry name" value="PH"/>
    <property type="match status" value="1"/>
</dbReference>
<dbReference type="SUPFAM" id="SSF50729">
    <property type="entry name" value="PH domain-like"/>
    <property type="match status" value="1"/>
</dbReference>
<dbReference type="PROSITE" id="PS50003">
    <property type="entry name" value="PH_DOMAIN"/>
    <property type="match status" value="1"/>
</dbReference>
<organism>
    <name type="scientific">Homo sapiens</name>
    <name type="common">Human</name>
    <dbReference type="NCBI Taxonomy" id="9606"/>
    <lineage>
        <taxon>Eukaryota</taxon>
        <taxon>Metazoa</taxon>
        <taxon>Chordata</taxon>
        <taxon>Craniata</taxon>
        <taxon>Vertebrata</taxon>
        <taxon>Euteleostomi</taxon>
        <taxon>Mammalia</taxon>
        <taxon>Eutheria</taxon>
        <taxon>Euarchontoglires</taxon>
        <taxon>Primates</taxon>
        <taxon>Haplorrhini</taxon>
        <taxon>Catarrhini</taxon>
        <taxon>Hominidae</taxon>
        <taxon>Homo</taxon>
    </lineage>
</organism>
<protein>
    <recommendedName>
        <fullName>GRB2-associated-binding protein 1</fullName>
    </recommendedName>
    <alternativeName>
        <fullName>GRB2-associated binder 1</fullName>
    </alternativeName>
    <alternativeName>
        <fullName>Growth factor receptor bound protein 2-associated protein 1</fullName>
    </alternativeName>
</protein>
<evidence type="ECO:0000250" key="1">
    <source>
        <dbReference type="UniProtKB" id="Q9QYY0"/>
    </source>
</evidence>
<evidence type="ECO:0000255" key="2">
    <source>
        <dbReference type="PROSITE-ProRule" id="PRU00145"/>
    </source>
</evidence>
<evidence type="ECO:0000256" key="3">
    <source>
        <dbReference type="SAM" id="MobiDB-lite"/>
    </source>
</evidence>
<evidence type="ECO:0000269" key="4">
    <source>
    </source>
</evidence>
<evidence type="ECO:0000269" key="5">
    <source>
    </source>
</evidence>
<evidence type="ECO:0000269" key="6">
    <source>
    </source>
</evidence>
<evidence type="ECO:0000269" key="7">
    <source>
    </source>
</evidence>
<evidence type="ECO:0000269" key="8">
    <source>
    </source>
</evidence>
<evidence type="ECO:0000269" key="9">
    <source ref="2"/>
</evidence>
<evidence type="ECO:0000303" key="10">
    <source>
    </source>
</evidence>
<evidence type="ECO:0000305" key="11"/>
<evidence type="ECO:0007744" key="12">
    <source>
    </source>
</evidence>
<evidence type="ECO:0007744" key="13">
    <source>
    </source>
</evidence>
<evidence type="ECO:0007744" key="14">
    <source>
    </source>
</evidence>
<evidence type="ECO:0007744" key="15">
    <source>
    </source>
</evidence>
<comment type="function">
    <text evidence="8">Adapter protein that plays a role in intracellular signaling cascades triggered by activated receptor-type kinases. Plays a role in FGFR1 signaling. Probably involved in signaling by the epidermal growth factor receptor (EGFR) and the insulin receptor (INSR). Involved in the MET/HGF-signaling pathway (PubMed:29408807).</text>
</comment>
<comment type="subunit">
    <text evidence="1 4 5 6 8">Identified in a complex containing FRS2, GRB2, GAB1, PIK3R1 and SOS1 (By similarity). Forms a tripartite complex containing GAB1, METTL13 and SPRY2 (PubMed:29408807). Within the complex interacts with METTL13 (PubMed:29408807). Interacts with GRB2 and with other SH2-containing proteins (PubMed:15010462). Interacts with phosphorylated LAT2 (PubMed:12486104). Interacts with PTPRJ (PubMed:12475979). Interacts (phosphorylated) with PTPN11 (PubMed:15010462). Interacts with HCK (PubMed:15010462).</text>
</comment>
<comment type="interaction">
    <interactant intactId="EBI-517684">
        <id>Q13480</id>
    </interactant>
    <interactant intactId="EBI-2105445">
        <id>P51451</id>
        <label>BLK</label>
    </interactant>
    <organismsDiffer>false</organismsDiffer>
    <experiments>3</experiments>
</comment>
<comment type="interaction">
    <interactant intactId="EBI-517684">
        <id>Q13480</id>
    </interactant>
    <interactant intactId="EBI-886">
        <id>P46108</id>
        <label>CRK</label>
    </interactant>
    <organismsDiffer>false</organismsDiffer>
    <experiments>2</experiments>
</comment>
<comment type="interaction">
    <interactant intactId="EBI-517684">
        <id>Q13480</id>
    </interactant>
    <interactant intactId="EBI-910">
        <id>P46109</id>
        <label>CRKL</label>
    </interactant>
    <organismsDiffer>false</organismsDiffer>
    <experiments>5</experiments>
</comment>
<comment type="interaction">
    <interactant intactId="EBI-517684">
        <id>Q13480</id>
    </interactant>
    <interactant intactId="EBI-297353">
        <id>P00533</id>
        <label>EGFR</label>
    </interactant>
    <organismsDiffer>false</organismsDiffer>
    <experiments>5</experiments>
</comment>
<comment type="interaction">
    <interactant intactId="EBI-517684">
        <id>Q13480</id>
    </interactant>
    <interactant intactId="EBI-1055635">
        <id>P07332</id>
        <label>FES</label>
    </interactant>
    <organismsDiffer>false</organismsDiffer>
    <experiments>2</experiments>
</comment>
<comment type="interaction">
    <interactant intactId="EBI-517684">
        <id>Q13480</id>
    </interactant>
    <interactant intactId="EBI-740418">
        <id>O75791</id>
        <label>GRAP2</label>
    </interactant>
    <organismsDiffer>false</organismsDiffer>
    <experiments>3</experiments>
</comment>
<comment type="interaction">
    <interactant intactId="EBI-517684">
        <id>Q13480</id>
    </interactant>
    <interactant intactId="EBI-401755">
        <id>P62993</id>
        <label>GRB2</label>
    </interactant>
    <organismsDiffer>false</organismsDiffer>
    <experiments>9</experiments>
</comment>
<comment type="interaction">
    <interactant intactId="EBI-517684">
        <id>Q13480</id>
    </interactant>
    <interactant intactId="EBI-10229384">
        <id>Q9UNN4</id>
        <label>GTF2A1L</label>
    </interactant>
    <organismsDiffer>false</organismsDiffer>
    <experiments>3</experiments>
</comment>
<comment type="interaction">
    <interactant intactId="EBI-517684">
        <id>Q13480</id>
    </interactant>
    <interactant intactId="EBI-1384248">
        <id>O15357</id>
        <label>INPPL1</label>
    </interactant>
    <organismsDiffer>false</organismsDiffer>
    <experiments>2</experiments>
</comment>
<comment type="interaction">
    <interactant intactId="EBI-517684">
        <id>Q13480</id>
    </interactant>
    <interactant intactId="EBI-1348">
        <id>P06239</id>
        <label>LCK</label>
    </interactant>
    <organismsDiffer>false</organismsDiffer>
    <experiments>10</experiments>
</comment>
<comment type="interaction">
    <interactant intactId="EBI-517684">
        <id>Q13480</id>
    </interactant>
    <interactant intactId="EBI-79452">
        <id>P07948</id>
        <label>LYN</label>
    </interactant>
    <organismsDiffer>false</organismsDiffer>
    <experiments>7</experiments>
</comment>
<comment type="interaction">
    <interactant intactId="EBI-517684">
        <id>Q13480</id>
    </interactant>
    <interactant intactId="EBI-389883">
        <id>P16333</id>
        <label>NCK1</label>
    </interactant>
    <organismsDiffer>false</organismsDiffer>
    <experiments>3</experiments>
</comment>
<comment type="interaction">
    <interactant intactId="EBI-517684">
        <id>Q13480</id>
    </interactant>
    <interactant intactId="EBI-713635">
        <id>O43639</id>
        <label>NCK2</label>
    </interactant>
    <organismsDiffer>false</organismsDiffer>
    <experiments>5</experiments>
</comment>
<comment type="interaction">
    <interactant intactId="EBI-517684">
        <id>Q13480</id>
    </interactant>
    <interactant intactId="EBI-79464">
        <id>P27986</id>
        <label>PIK3R1</label>
    </interactant>
    <organismsDiffer>false</organismsDiffer>
    <experiments>33</experiments>
</comment>
<comment type="interaction">
    <interactant intactId="EBI-517684">
        <id>Q13480</id>
    </interactant>
    <interactant intactId="EBI-346930">
        <id>O00459</id>
        <label>PIK3R2</label>
    </interactant>
    <organismsDiffer>false</organismsDiffer>
    <experiments>23</experiments>
</comment>
<comment type="interaction">
    <interactant intactId="EBI-517684">
        <id>Q13480</id>
    </interactant>
    <interactant intactId="EBI-79893">
        <id>Q92569</id>
        <label>PIK3R3</label>
    </interactant>
    <organismsDiffer>false</organismsDiffer>
    <experiments>36</experiments>
</comment>
<comment type="interaction">
    <interactant intactId="EBI-517684">
        <id>Q13480</id>
    </interactant>
    <interactant intactId="EBI-79387">
        <id>P19174</id>
        <label>PLCG1</label>
    </interactant>
    <organismsDiffer>false</organismsDiffer>
    <experiments>36</experiments>
</comment>
<comment type="interaction">
    <interactant intactId="EBI-517684">
        <id>Q13480</id>
    </interactant>
    <interactant intactId="EBI-617403">
        <id>P16885</id>
        <label>PLCG2</label>
    </interactant>
    <organismsDiffer>false</organismsDiffer>
    <experiments>15</experiments>
</comment>
<comment type="interaction">
    <interactant intactId="EBI-517684">
        <id>Q13480</id>
    </interactant>
    <interactant intactId="EBI-1383632">
        <id>Q13882</id>
        <label>PTK6</label>
    </interactant>
    <organismsDiffer>false</organismsDiffer>
    <experiments>6</experiments>
</comment>
<comment type="interaction">
    <interactant intactId="EBI-517684">
        <id>Q13480</id>
    </interactant>
    <interactant intactId="EBI-297779">
        <id>Q06124</id>
        <label>PTPN11</label>
    </interactant>
    <organismsDiffer>false</organismsDiffer>
    <experiments>42</experiments>
</comment>
<comment type="interaction">
    <interactant intactId="EBI-517684">
        <id>Q13480</id>
    </interactant>
    <interactant intactId="EBI-17635971">
        <id>Q06124-2</id>
        <label>PTPN11</label>
    </interactant>
    <organismsDiffer>false</organismsDiffer>
    <experiments>2</experiments>
</comment>
<comment type="interaction">
    <interactant intactId="EBI-517684">
        <id>Q13480</id>
    </interactant>
    <interactant intactId="EBI-2264500">
        <id>Q12913</id>
        <label>PTPRJ</label>
    </interactant>
    <organismsDiffer>false</organismsDiffer>
    <experiments>2</experiments>
</comment>
<comment type="interaction">
    <interactant intactId="EBI-517684">
        <id>Q13480</id>
    </interactant>
    <interactant intactId="EBI-702209">
        <id>P49023</id>
        <label>PXN</label>
    </interactant>
    <organismsDiffer>false</organismsDiffer>
    <experiments>2</experiments>
</comment>
<comment type="interaction">
    <interactant intactId="EBI-517684">
        <id>Q13480</id>
    </interactant>
    <interactant intactId="EBI-1026476">
        <id>P20936</id>
        <label>RASA1</label>
    </interactant>
    <organismsDiffer>false</organismsDiffer>
    <experiments>25</experiments>
</comment>
<comment type="interaction">
    <interactant intactId="EBI-517684">
        <id>Q13480</id>
    </interactant>
    <interactant intactId="EBI-3923013">
        <id>O14796</id>
        <label>SH2D1B</label>
    </interactant>
    <organismsDiffer>false</organismsDiffer>
    <experiments>8</experiments>
</comment>
<comment type="interaction">
    <interactant intactId="EBI-517684">
        <id>Q13480</id>
    </interactant>
    <interactant intactId="EBI-490630">
        <id>Q9NP31</id>
        <label>SH2D2A</label>
    </interactant>
    <organismsDiffer>false</organismsDiffer>
    <experiments>6</experiments>
</comment>
<comment type="interaction">
    <interactant intactId="EBI-517684">
        <id>Q13480</id>
    </interactant>
    <interactant intactId="EBI-78835">
        <id>P29353</id>
        <label>SHC1</label>
    </interactant>
    <organismsDiffer>false</organismsDiffer>
    <experiments>9</experiments>
</comment>
<comment type="interaction">
    <interactant intactId="EBI-517684">
        <id>Q13480</id>
    </interactant>
    <interactant intactId="EBI-1222854">
        <id>Q9H6Q3</id>
        <label>SLA2</label>
    </interactant>
    <organismsDiffer>false</organismsDiffer>
    <experiments>4</experiments>
</comment>
<comment type="interaction">
    <interactant intactId="EBI-517684">
        <id>Q13480</id>
    </interactant>
    <interactant intactId="EBI-714146">
        <id>O14543</id>
        <label>SOCS3</label>
    </interactant>
    <organismsDiffer>false</organismsDiffer>
    <experiments>4</experiments>
</comment>
<comment type="interaction">
    <interactant intactId="EBI-517684">
        <id>Q13480</id>
    </interactant>
    <interactant intactId="EBI-3929549">
        <id>O14544</id>
        <label>SOCS6</label>
    </interactant>
    <organismsDiffer>false</organismsDiffer>
    <experiments>9</experiments>
</comment>
<comment type="interaction">
    <interactant intactId="EBI-517684">
        <id>Q13480</id>
    </interactant>
    <interactant intactId="EBI-621482">
        <id>P12931</id>
        <label>SRC</label>
    </interactant>
    <organismsDiffer>false</organismsDiffer>
    <experiments>12</experiments>
</comment>
<comment type="interaction">
    <interactant intactId="EBI-517684">
        <id>Q13480</id>
    </interactant>
    <interactant intactId="EBI-6083058">
        <id>Q9ULZ2</id>
        <label>STAP1</label>
    </interactant>
    <organismsDiffer>false</organismsDiffer>
    <experiments>3</experiments>
</comment>
<comment type="interaction">
    <interactant intactId="EBI-517684">
        <id>Q13480</id>
    </interactant>
    <interactant intactId="EBI-78302">
        <id>P43405</id>
        <label>SYK</label>
    </interactant>
    <organismsDiffer>false</organismsDiffer>
    <experiments>4</experiments>
</comment>
<comment type="interaction">
    <interactant intactId="EBI-517684">
        <id>Q13480</id>
    </interactant>
    <interactant intactId="EBI-1383480">
        <id>P42680</id>
        <label>TEC</label>
    </interactant>
    <organismsDiffer>false</organismsDiffer>
    <experiments>2</experiments>
</comment>
<comment type="interaction">
    <interactant intactId="EBI-517684">
        <id>Q13480</id>
    </interactant>
    <interactant intactId="EBI-625518">
        <id>P15498</id>
        <label>VAV1</label>
    </interactant>
    <organismsDiffer>false</organismsDiffer>
    <experiments>2</experiments>
</comment>
<comment type="interaction">
    <interactant intactId="EBI-517684">
        <id>Q13480</id>
    </interactant>
    <interactant intactId="EBI-297549">
        <id>P52735</id>
        <label>VAV2</label>
    </interactant>
    <organismsDiffer>false</organismsDiffer>
    <experiments>2</experiments>
</comment>
<comment type="interaction">
    <interactant intactId="EBI-517684">
        <id>Q13480</id>
    </interactant>
    <interactant intactId="EBI-297568">
        <id>Q9UKW4</id>
        <label>VAV3</label>
    </interactant>
    <organismsDiffer>false</organismsDiffer>
    <experiments>6</experiments>
</comment>
<comment type="interaction">
    <interactant intactId="EBI-517684">
        <id>Q13480</id>
    </interactant>
    <interactant intactId="EBI-515331">
        <id>P07947</id>
        <label>YES1</label>
    </interactant>
    <organismsDiffer>false</organismsDiffer>
    <experiments>7</experiments>
</comment>
<comment type="interaction">
    <interactant intactId="EBI-517684">
        <id>Q13480</id>
    </interactant>
    <interactant intactId="EBI-5747849">
        <id>P50904</id>
        <label>Rasa1</label>
    </interactant>
    <organismsDiffer>true</organismsDiffer>
    <experiments>2</experiments>
</comment>
<comment type="alternative products">
    <event type="alternative splicing"/>
    <isoform>
        <id>Q13480-1</id>
        <name>1</name>
        <sequence type="displayed"/>
    </isoform>
    <isoform>
        <id>Q13480-2</id>
        <name>2</name>
        <sequence type="described" ref="VSP_017137"/>
    </isoform>
</comment>
<comment type="PTM">
    <text evidence="6">Phosphorylated in response to FGFR1 activation. Phosphorylated on tyrosine residue(s) by the epidermal growth factor receptor (EGFR) and the insulin receptor (INSR). Tyrosine phosphorylation of GAB1 mediates interaction with several proteins that contain SH2 domains. Phosphorylated on tyrosine residues by HCK upon IL6 signaling.</text>
</comment>
<comment type="disease" evidence="8">
    <disease id="DI-05262">
        <name>Deafness, autosomal recessive, 26</name>
        <acronym>DFNB26</acronym>
        <description>A form of non-syndromic sensorineural deafness characterized by prelingual, severe to profound hearing loss. Sensorineural deafness results from damage to the neural receptors of the inner ear, the nerve pathways to the brain, or the area of the brain that receives sound information.</description>
        <dbReference type="MIM" id="605428"/>
    </disease>
    <text>The disease is caused by variants affecting the gene represented in this entry.</text>
</comment>
<comment type="similarity">
    <text evidence="11">Belongs to the GAB family.</text>
</comment>
<feature type="initiator methionine" description="Removed" evidence="14">
    <location>
        <position position="1"/>
    </location>
</feature>
<feature type="chain" id="PRO_0000050282" description="GRB2-associated-binding protein 1">
    <location>
        <begin position="2"/>
        <end position="694"/>
    </location>
</feature>
<feature type="domain" description="PH" evidence="2">
    <location>
        <begin position="5"/>
        <end position="116"/>
    </location>
</feature>
<feature type="region of interest" description="Disordered" evidence="3">
    <location>
        <begin position="122"/>
        <end position="164"/>
    </location>
</feature>
<feature type="region of interest" description="Disordered" evidence="3">
    <location>
        <begin position="194"/>
        <end position="231"/>
    </location>
</feature>
<feature type="region of interest" description="Disordered" evidence="3">
    <location>
        <begin position="323"/>
        <end position="386"/>
    </location>
</feature>
<feature type="region of interest" description="Disordered" evidence="3">
    <location>
        <begin position="493"/>
        <end position="532"/>
    </location>
</feature>
<feature type="region of interest" description="Disordered" evidence="3">
    <location>
        <begin position="544"/>
        <end position="656"/>
    </location>
</feature>
<feature type="region of interest" description="Disordered" evidence="3">
    <location>
        <begin position="671"/>
        <end position="694"/>
    </location>
</feature>
<feature type="compositionally biased region" description="Polar residues" evidence="3">
    <location>
        <begin position="145"/>
        <end position="157"/>
    </location>
</feature>
<feature type="compositionally biased region" description="Basic and acidic residues" evidence="3">
    <location>
        <begin position="194"/>
        <end position="203"/>
    </location>
</feature>
<feature type="compositionally biased region" description="Polar residues" evidence="3">
    <location>
        <begin position="204"/>
        <end position="231"/>
    </location>
</feature>
<feature type="compositionally biased region" description="Polar residues" evidence="3">
    <location>
        <begin position="362"/>
        <end position="386"/>
    </location>
</feature>
<feature type="compositionally biased region" description="Polar residues" evidence="3">
    <location>
        <begin position="594"/>
        <end position="611"/>
    </location>
</feature>
<feature type="compositionally biased region" description="Basic and acidic residues" evidence="3">
    <location>
        <begin position="672"/>
        <end position="684"/>
    </location>
</feature>
<feature type="compositionally biased region" description="Polar residues" evidence="3">
    <location>
        <begin position="685"/>
        <end position="694"/>
    </location>
</feature>
<feature type="modified residue" description="N-acetylserine" evidence="14">
    <location>
        <position position="2"/>
    </location>
</feature>
<feature type="modified residue" description="Phosphoserine" evidence="15">
    <location>
        <position position="251"/>
    </location>
</feature>
<feature type="modified residue" description="Phosphoserine" evidence="15">
    <location>
        <position position="253"/>
    </location>
</feature>
<feature type="modified residue" description="Phosphoserine" evidence="15">
    <location>
        <position position="266"/>
    </location>
</feature>
<feature type="modified residue" description="Phosphoserine" evidence="15">
    <location>
        <position position="304"/>
    </location>
</feature>
<feature type="modified residue" description="Phosphothreonine" evidence="15">
    <location>
        <position position="387"/>
    </location>
</feature>
<feature type="modified residue" description="Phosphoserine" evidence="15">
    <location>
        <position position="402"/>
    </location>
</feature>
<feature type="modified residue" description="Phosphoserine" evidence="1">
    <location>
        <position position="454"/>
    </location>
</feature>
<feature type="modified residue" description="Phosphotyrosine" evidence="13">
    <location>
        <position position="627"/>
    </location>
</feature>
<feature type="modified residue" description="Phosphothreonine" evidence="15">
    <location>
        <position position="638"/>
    </location>
</feature>
<feature type="modified residue" description="Phosphoserine" evidence="15">
    <location>
        <position position="651"/>
    </location>
</feature>
<feature type="modified residue" description="Phosphotyrosine" evidence="12 15">
    <location>
        <position position="659"/>
    </location>
</feature>
<feature type="modified residue" description="Phosphoserine" evidence="15">
    <location>
        <position position="683"/>
    </location>
</feature>
<feature type="splice variant" id="VSP_017137" description="In isoform 2." evidence="10">
    <original>K</original>
    <variation>KGQSPKILRLKPHGLERTDSQTIGDFATRRK</variation>
    <location>
        <position position="528"/>
    </location>
</feature>
<feature type="sequence variant" id="VAR_036132" description="In a breast cancer sample; somatic mutation." evidence="7">
    <original>Y</original>
    <variation>C</variation>
    <location>
        <position position="83"/>
    </location>
</feature>
<feature type="sequence variant" id="VAR_080809" description="In DFNB26; results in dysregulation of MET-signaling pathway genes expression; does not affect interaction with METTL13; dbSNP:rs1553950635." evidence="8">
    <original>G</original>
    <variation>E</variation>
    <location>
        <position position="116"/>
    </location>
</feature>
<feature type="sequence variant" id="VAR_025261" description="In dbSNP:rs28925904." evidence="9">
    <original>P</original>
    <variation>L</variation>
    <location>
        <position position="311"/>
    </location>
</feature>
<feature type="sequence variant" id="VAR_053096" description="In dbSNP:rs2229879.">
    <original>T</original>
    <variation>I</variation>
    <location>
        <position position="377"/>
    </location>
</feature>
<feature type="sequence variant" id="VAR_036133" description="In a breast cancer sample; somatic mutation." evidence="7">
    <original>T</original>
    <variation>N</variation>
    <location>
        <position position="387"/>
    </location>
</feature>
<feature type="sequence conflict" description="In Ref. 1; AAC50380." evidence="11" ref="1">
    <original>A</original>
    <variation>G</variation>
    <location>
        <position position="204"/>
    </location>
</feature>
<feature type="sequence conflict" description="In Ref. 1; AAC50380." evidence="11" ref="1">
    <original>C</original>
    <variation>S</variation>
    <location>
        <position position="213"/>
    </location>
</feature>
<feature type="modified residue" description="Phosphoserine" evidence="12">
    <location sequence="Q13480-2">
        <position position="547"/>
    </location>
</feature>
<keyword id="KW-0002">3D-structure</keyword>
<keyword id="KW-0007">Acetylation</keyword>
<keyword id="KW-0025">Alternative splicing</keyword>
<keyword id="KW-0209">Deafness</keyword>
<keyword id="KW-0225">Disease variant</keyword>
<keyword id="KW-1010">Non-syndromic deafness</keyword>
<keyword id="KW-0597">Phosphoprotein</keyword>
<keyword id="KW-1267">Proteomics identification</keyword>
<keyword id="KW-1185">Reference proteome</keyword>
<accession>Q13480</accession>
<accession>A8K152</accession>
<accession>Q4W5G2</accession>
<accession>Q6P1W2</accession>
<sequence length="694" mass="76616">MSGGEVVCSGWLRKSPPEKKLKRYAWKRRWFVLRSGRLTGDPDVLEYYKNDHAKKPIRIIDLNLCQQVDAGLTFNKKEFENSYIFDINTIDRIFYLVADSEEEMNKWVRCICDICGFNPTEEDPVKPPGSSLQAPADLPLAINTAPPSTQADSSSATLPPPYQLINVPPHLETLGIQEDPQDYLLLINCQSKKPEPTRTHADSAKSTSSETDCNDNVPSHKNPASSQSKHGMNGFFQQQMIYDSPPSRAPSASVDSSLYNLPRSYSHDVLPKVSPSSTEADGELYVFNTPSGTSSVETQMRHVSISYDIPPTPGNTYQIPRTFPEGTLGQTSKLDTIPDIPPPRPPKPHPAHDRSPVETCSIPRTASDTDSSYCIPTAGMSPSRSNTISTVDLNKLRKDASSQDCYDIPRAFPSDRSSSLEGFHNHFKVKNVLTVGSVSSEELDENYVPMNPNSPPRQHSSSFTEPIQEANYVPMTPGTFDFSSFGMQVPPPAHMGFRSSPKTPPRRPVPVADCEPPPVDRNLKPDRKVKPAPLEIKPLPEWEELQAPVRSPITRSFARDSSRFPMSPRPDSVHSTTSSSDSHDSEENYVPMNPNLSSEDPNLFGSNSLDGGSSPMIKPKGDKQVEYLDLDLDSGKSTPPRKQKSSGSGSSVADERVDYVVVDQQKTLALKSTREAWTDGRQSTESETPAKSVK</sequence>
<name>GAB1_HUMAN</name>